<dbReference type="EMBL" id="CP000233">
    <property type="protein sequence ID" value="ABD99377.1"/>
    <property type="molecule type" value="Genomic_DNA"/>
</dbReference>
<dbReference type="RefSeq" id="WP_003699900.1">
    <property type="nucleotide sequence ID" value="NC_007929.1"/>
</dbReference>
<dbReference type="RefSeq" id="YP_535460.1">
    <property type="nucleotide sequence ID" value="NC_007929.1"/>
</dbReference>
<dbReference type="SMR" id="Q1WUF8"/>
<dbReference type="STRING" id="362948.LSL_0568"/>
<dbReference type="KEGG" id="lsl:LSL_0568"/>
<dbReference type="PATRIC" id="fig|362948.14.peg.647"/>
<dbReference type="HOGENOM" id="CLU_070525_2_0_9"/>
<dbReference type="OrthoDB" id="9805006at2"/>
<dbReference type="Proteomes" id="UP000006559">
    <property type="component" value="Chromosome"/>
</dbReference>
<dbReference type="GO" id="GO:0005829">
    <property type="term" value="C:cytosol"/>
    <property type="evidence" value="ECO:0007669"/>
    <property type="project" value="TreeGrafter"/>
</dbReference>
<dbReference type="GO" id="GO:0000028">
    <property type="term" value="P:ribosomal small subunit assembly"/>
    <property type="evidence" value="ECO:0007669"/>
    <property type="project" value="TreeGrafter"/>
</dbReference>
<dbReference type="GO" id="GO:0006412">
    <property type="term" value="P:translation"/>
    <property type="evidence" value="ECO:0007669"/>
    <property type="project" value="TreeGrafter"/>
</dbReference>
<dbReference type="CDD" id="cd01734">
    <property type="entry name" value="YlxS_C"/>
    <property type="match status" value="1"/>
</dbReference>
<dbReference type="FunFam" id="3.30.300.70:FF:000001">
    <property type="entry name" value="Ribosome maturation factor RimP"/>
    <property type="match status" value="1"/>
</dbReference>
<dbReference type="Gene3D" id="2.30.30.180">
    <property type="entry name" value="Ribosome maturation factor RimP, C-terminal domain"/>
    <property type="match status" value="1"/>
</dbReference>
<dbReference type="Gene3D" id="3.30.300.70">
    <property type="entry name" value="RimP-like superfamily, N-terminal"/>
    <property type="match status" value="1"/>
</dbReference>
<dbReference type="HAMAP" id="MF_01077">
    <property type="entry name" value="RimP"/>
    <property type="match status" value="1"/>
</dbReference>
<dbReference type="InterPro" id="IPR003728">
    <property type="entry name" value="Ribosome_maturation_RimP"/>
</dbReference>
<dbReference type="InterPro" id="IPR028998">
    <property type="entry name" value="RimP_C"/>
</dbReference>
<dbReference type="InterPro" id="IPR036847">
    <property type="entry name" value="RimP_C_sf"/>
</dbReference>
<dbReference type="InterPro" id="IPR028989">
    <property type="entry name" value="RimP_N"/>
</dbReference>
<dbReference type="InterPro" id="IPR035956">
    <property type="entry name" value="RimP_N_sf"/>
</dbReference>
<dbReference type="NCBIfam" id="NF000928">
    <property type="entry name" value="PRK00092.1-2"/>
    <property type="match status" value="1"/>
</dbReference>
<dbReference type="PANTHER" id="PTHR33867">
    <property type="entry name" value="RIBOSOME MATURATION FACTOR RIMP"/>
    <property type="match status" value="1"/>
</dbReference>
<dbReference type="PANTHER" id="PTHR33867:SF1">
    <property type="entry name" value="RIBOSOME MATURATION FACTOR RIMP"/>
    <property type="match status" value="1"/>
</dbReference>
<dbReference type="Pfam" id="PF17384">
    <property type="entry name" value="DUF150_C"/>
    <property type="match status" value="1"/>
</dbReference>
<dbReference type="Pfam" id="PF02576">
    <property type="entry name" value="RimP_N"/>
    <property type="match status" value="1"/>
</dbReference>
<dbReference type="SUPFAM" id="SSF74942">
    <property type="entry name" value="YhbC-like, C-terminal domain"/>
    <property type="match status" value="1"/>
</dbReference>
<dbReference type="SUPFAM" id="SSF75420">
    <property type="entry name" value="YhbC-like, N-terminal domain"/>
    <property type="match status" value="1"/>
</dbReference>
<gene>
    <name evidence="1" type="primary">rimP</name>
    <name type="ordered locus">LSL_0568</name>
</gene>
<reference key="1">
    <citation type="journal article" date="2006" name="Proc. Natl. Acad. Sci. U.S.A.">
        <title>Multireplicon genome architecture of Lactobacillus salivarius.</title>
        <authorList>
            <person name="Claesson M.J."/>
            <person name="Li Y."/>
            <person name="Leahy S."/>
            <person name="Canchaya C."/>
            <person name="van Pijkeren J.P."/>
            <person name="Cerdeno-Tarraga A.M."/>
            <person name="Parkhill J."/>
            <person name="Flynn S."/>
            <person name="O'Sullivan G.C."/>
            <person name="Collins J.K."/>
            <person name="Higgins D."/>
            <person name="Shanahan F."/>
            <person name="Fitzgerald G.F."/>
            <person name="van Sinderen D."/>
            <person name="O'Toole P.W."/>
        </authorList>
    </citation>
    <scope>NUCLEOTIDE SEQUENCE [LARGE SCALE GENOMIC DNA]</scope>
    <source>
        <strain>UCC118</strain>
    </source>
</reference>
<comment type="function">
    <text evidence="1">Required for maturation of 30S ribosomal subunits.</text>
</comment>
<comment type="subcellular location">
    <subcellularLocation>
        <location evidence="1">Cytoplasm</location>
    </subcellularLocation>
</comment>
<comment type="similarity">
    <text evidence="1">Belongs to the RimP family.</text>
</comment>
<evidence type="ECO:0000255" key="1">
    <source>
        <dbReference type="HAMAP-Rule" id="MF_01077"/>
    </source>
</evidence>
<proteinExistence type="inferred from homology"/>
<feature type="chain" id="PRO_1000064727" description="Ribosome maturation factor RimP">
    <location>
        <begin position="1"/>
        <end position="157"/>
    </location>
</feature>
<organism>
    <name type="scientific">Ligilactobacillus salivarius (strain UCC118)</name>
    <name type="common">Lactobacillus salivarius</name>
    <dbReference type="NCBI Taxonomy" id="362948"/>
    <lineage>
        <taxon>Bacteria</taxon>
        <taxon>Bacillati</taxon>
        <taxon>Bacillota</taxon>
        <taxon>Bacilli</taxon>
        <taxon>Lactobacillales</taxon>
        <taxon>Lactobacillaceae</taxon>
        <taxon>Ligilactobacillus</taxon>
    </lineage>
</organism>
<accession>Q1WUF8</accession>
<sequence>MSSVVETVTNLVTPILDENHFELVDVEFVKEGKSWYLRVYIDKPNGINIEECALVSDKLSEKLDSCDPDPIPQAYYLEVSSPGAERPLKKEKDYERALNKYIHISLYQAIDGQKVYEGTMVDLNKETLTLEYRVKTRTVTKTFDRNKIAKARLAIKF</sequence>
<keyword id="KW-0963">Cytoplasm</keyword>
<keyword id="KW-1185">Reference proteome</keyword>
<keyword id="KW-0690">Ribosome biogenesis</keyword>
<protein>
    <recommendedName>
        <fullName evidence="1">Ribosome maturation factor RimP</fullName>
    </recommendedName>
</protein>
<name>RIMP_LIGS1</name>